<protein>
    <recommendedName>
        <fullName evidence="1">Cytochrome c-type biogenesis protein CcmE</fullName>
    </recommendedName>
    <alternativeName>
        <fullName evidence="1">Cytochrome c maturation protein E</fullName>
    </alternativeName>
    <alternativeName>
        <fullName evidence="1">Heme chaperone CcmE</fullName>
    </alternativeName>
</protein>
<proteinExistence type="inferred from homology"/>
<comment type="function">
    <text evidence="1">Heme chaperone required for the biogenesis of c-type cytochromes. Transiently binds heme delivered by CcmC and transfers the heme to apo-cytochromes in a process facilitated by CcmF and CcmH.</text>
</comment>
<comment type="subcellular location">
    <subcellularLocation>
        <location evidence="1">Cell inner membrane</location>
        <topology evidence="1">Single-pass type II membrane protein</topology>
        <orientation evidence="1">Periplasmic side</orientation>
    </subcellularLocation>
</comment>
<comment type="similarity">
    <text evidence="1">Belongs to the CcmE/CycJ family.</text>
</comment>
<accession>B8IUY7</accession>
<keyword id="KW-0997">Cell inner membrane</keyword>
<keyword id="KW-1003">Cell membrane</keyword>
<keyword id="KW-0201">Cytochrome c-type biogenesis</keyword>
<keyword id="KW-0349">Heme</keyword>
<keyword id="KW-0408">Iron</keyword>
<keyword id="KW-0472">Membrane</keyword>
<keyword id="KW-0479">Metal-binding</keyword>
<keyword id="KW-1185">Reference proteome</keyword>
<keyword id="KW-0735">Signal-anchor</keyword>
<keyword id="KW-0812">Transmembrane</keyword>
<keyword id="KW-1133">Transmembrane helix</keyword>
<dbReference type="EMBL" id="CP001349">
    <property type="protein sequence ID" value="ACL59045.1"/>
    <property type="molecule type" value="Genomic_DNA"/>
</dbReference>
<dbReference type="RefSeq" id="WP_015930694.1">
    <property type="nucleotide sequence ID" value="NC_011894.1"/>
</dbReference>
<dbReference type="SMR" id="B8IUY7"/>
<dbReference type="STRING" id="460265.Mnod_4167"/>
<dbReference type="KEGG" id="mno:Mnod_4167"/>
<dbReference type="eggNOG" id="COG2332">
    <property type="taxonomic scope" value="Bacteria"/>
</dbReference>
<dbReference type="HOGENOM" id="CLU_079503_1_1_5"/>
<dbReference type="OrthoDB" id="9793584at2"/>
<dbReference type="Proteomes" id="UP000008207">
    <property type="component" value="Chromosome"/>
</dbReference>
<dbReference type="GO" id="GO:0005886">
    <property type="term" value="C:plasma membrane"/>
    <property type="evidence" value="ECO:0007669"/>
    <property type="project" value="UniProtKB-SubCell"/>
</dbReference>
<dbReference type="GO" id="GO:0020037">
    <property type="term" value="F:heme binding"/>
    <property type="evidence" value="ECO:0007669"/>
    <property type="project" value="InterPro"/>
</dbReference>
<dbReference type="GO" id="GO:0046872">
    <property type="term" value="F:metal ion binding"/>
    <property type="evidence" value="ECO:0007669"/>
    <property type="project" value="UniProtKB-KW"/>
</dbReference>
<dbReference type="GO" id="GO:0017004">
    <property type="term" value="P:cytochrome complex assembly"/>
    <property type="evidence" value="ECO:0007669"/>
    <property type="project" value="UniProtKB-KW"/>
</dbReference>
<dbReference type="FunFam" id="2.40.50.140:FF:000104">
    <property type="entry name" value="Cytochrome c-type biogenesis protein CcmE"/>
    <property type="match status" value="1"/>
</dbReference>
<dbReference type="Gene3D" id="2.40.50.140">
    <property type="entry name" value="Nucleic acid-binding proteins"/>
    <property type="match status" value="1"/>
</dbReference>
<dbReference type="HAMAP" id="MF_01959">
    <property type="entry name" value="CcmE"/>
    <property type="match status" value="1"/>
</dbReference>
<dbReference type="InterPro" id="IPR004329">
    <property type="entry name" value="CcmE"/>
</dbReference>
<dbReference type="InterPro" id="IPR036127">
    <property type="entry name" value="CcmE-like_sf"/>
</dbReference>
<dbReference type="InterPro" id="IPR012340">
    <property type="entry name" value="NA-bd_OB-fold"/>
</dbReference>
<dbReference type="NCBIfam" id="NF009727">
    <property type="entry name" value="PRK13254.1-1"/>
    <property type="match status" value="1"/>
</dbReference>
<dbReference type="NCBIfam" id="NF009731">
    <property type="entry name" value="PRK13254.1-5"/>
    <property type="match status" value="1"/>
</dbReference>
<dbReference type="PANTHER" id="PTHR34128">
    <property type="entry name" value="CYTOCHROME C-TYPE BIOGENESIS PROTEIN CCME HOMOLOG, MITOCHONDRIAL"/>
    <property type="match status" value="1"/>
</dbReference>
<dbReference type="PANTHER" id="PTHR34128:SF2">
    <property type="entry name" value="CYTOCHROME C-TYPE BIOGENESIS PROTEIN CCME HOMOLOG, MITOCHONDRIAL"/>
    <property type="match status" value="1"/>
</dbReference>
<dbReference type="Pfam" id="PF03100">
    <property type="entry name" value="CcmE"/>
    <property type="match status" value="1"/>
</dbReference>
<dbReference type="SUPFAM" id="SSF82093">
    <property type="entry name" value="Heme chaperone CcmE"/>
    <property type="match status" value="1"/>
</dbReference>
<feature type="chain" id="PRO_1000189033" description="Cytochrome c-type biogenesis protein CcmE">
    <location>
        <begin position="1"/>
        <end position="168"/>
    </location>
</feature>
<feature type="topological domain" description="Cytoplasmic" evidence="1">
    <location>
        <begin position="1"/>
        <end position="7"/>
    </location>
</feature>
<feature type="transmembrane region" description="Helical; Signal-anchor for type II membrane protein" evidence="1">
    <location>
        <begin position="8"/>
        <end position="28"/>
    </location>
</feature>
<feature type="topological domain" description="Periplasmic" evidence="1">
    <location>
        <begin position="29"/>
        <end position="168"/>
    </location>
</feature>
<feature type="region of interest" description="Disordered" evidence="2">
    <location>
        <begin position="134"/>
        <end position="168"/>
    </location>
</feature>
<feature type="binding site" description="covalent" evidence="1">
    <location>
        <position position="122"/>
    </location>
    <ligand>
        <name>heme</name>
        <dbReference type="ChEBI" id="CHEBI:30413"/>
    </ligand>
</feature>
<feature type="binding site" description="axial binding residue" evidence="1">
    <location>
        <position position="126"/>
    </location>
    <ligand>
        <name>heme</name>
        <dbReference type="ChEBI" id="CHEBI:30413"/>
    </ligand>
    <ligandPart>
        <name>Fe</name>
        <dbReference type="ChEBI" id="CHEBI:18248"/>
    </ligandPart>
</feature>
<evidence type="ECO:0000255" key="1">
    <source>
        <dbReference type="HAMAP-Rule" id="MF_01959"/>
    </source>
</evidence>
<evidence type="ECO:0000256" key="2">
    <source>
        <dbReference type="SAM" id="MobiDB-lite"/>
    </source>
</evidence>
<gene>
    <name evidence="1" type="primary">ccmE</name>
    <name evidence="1" type="synonym">cycJ</name>
    <name type="ordered locus">Mnod_4167</name>
</gene>
<organism>
    <name type="scientific">Methylobacterium nodulans (strain LMG 21967 / CNCM I-2342 / ORS 2060)</name>
    <dbReference type="NCBI Taxonomy" id="460265"/>
    <lineage>
        <taxon>Bacteria</taxon>
        <taxon>Pseudomonadati</taxon>
        <taxon>Pseudomonadota</taxon>
        <taxon>Alphaproteobacteria</taxon>
        <taxon>Hyphomicrobiales</taxon>
        <taxon>Methylobacteriaceae</taxon>
        <taxon>Methylobacterium</taxon>
    </lineage>
</organism>
<name>CCME_METNO</name>
<reference key="1">
    <citation type="submission" date="2009-01" db="EMBL/GenBank/DDBJ databases">
        <title>Complete sequence of chromosome of Methylobacterium nodulans ORS 2060.</title>
        <authorList>
            <consortium name="US DOE Joint Genome Institute"/>
            <person name="Lucas S."/>
            <person name="Copeland A."/>
            <person name="Lapidus A."/>
            <person name="Glavina del Rio T."/>
            <person name="Dalin E."/>
            <person name="Tice H."/>
            <person name="Bruce D."/>
            <person name="Goodwin L."/>
            <person name="Pitluck S."/>
            <person name="Sims D."/>
            <person name="Brettin T."/>
            <person name="Detter J.C."/>
            <person name="Han C."/>
            <person name="Larimer F."/>
            <person name="Land M."/>
            <person name="Hauser L."/>
            <person name="Kyrpides N."/>
            <person name="Ivanova N."/>
            <person name="Marx C.J."/>
            <person name="Richardson P."/>
        </authorList>
    </citation>
    <scope>NUCLEOTIDE SEQUENCE [LARGE SCALE GENOMIC DNA]</scope>
    <source>
        <strain>LMG 21967 / CNCM I-2342 / ORS 2060</strain>
    </source>
</reference>
<sequence>MTRKQRRLMLIGVCGAVLAVALGLVLWAMRGTIVFFRSPSEIASQAVAPGVRFRLGGLVQEGSVQRGPDGRVAFVVTDNGATVPVRYQGLLPDLFREGQGVVAEGMLEPGGMFRADTVLAKHDETYMPREVADALKKQGHWQGEAKHPGGTAPAPQTASGEKPALRQQ</sequence>